<accession>Q9XQR4</accession>
<accession>Q8HS24</accession>
<comment type="function">
    <text evidence="1">May play a role in photosystem I and II biogenesis.</text>
</comment>
<comment type="subcellular location">
    <subcellularLocation>
        <location evidence="1">Plastid</location>
        <location evidence="1">Chloroplast thylakoid membrane</location>
        <topology evidence="1">Single-pass membrane protein</topology>
    </subcellularLocation>
</comment>
<comment type="similarity">
    <text evidence="1">Belongs to the PsbN family.</text>
</comment>
<comment type="caution">
    <text evidence="1">Originally thought to be a component of PSII; based on experiments in Synechocystis, N.tabacum and barley, and its absence from PSII in T.elongatus and T.vulcanus, this is probably not true.</text>
</comment>
<organism>
    <name type="scientific">Pisum sativum</name>
    <name type="common">Garden pea</name>
    <name type="synonym">Lathyrus oleraceus</name>
    <dbReference type="NCBI Taxonomy" id="3888"/>
    <lineage>
        <taxon>Eukaryota</taxon>
        <taxon>Viridiplantae</taxon>
        <taxon>Streptophyta</taxon>
        <taxon>Embryophyta</taxon>
        <taxon>Tracheophyta</taxon>
        <taxon>Spermatophyta</taxon>
        <taxon>Magnoliopsida</taxon>
        <taxon>eudicotyledons</taxon>
        <taxon>Gunneridae</taxon>
        <taxon>Pentapetalae</taxon>
        <taxon>rosids</taxon>
        <taxon>fabids</taxon>
        <taxon>Fabales</taxon>
        <taxon>Fabaceae</taxon>
        <taxon>Papilionoideae</taxon>
        <taxon>50 kb inversion clade</taxon>
        <taxon>NPAAA clade</taxon>
        <taxon>Hologalegina</taxon>
        <taxon>IRL clade</taxon>
        <taxon>Fabeae</taxon>
        <taxon>Pisum</taxon>
    </lineage>
</organism>
<protein>
    <recommendedName>
        <fullName evidence="1">Protein PsbN</fullName>
    </recommendedName>
</protein>
<reference key="1">
    <citation type="journal article" date="1989" name="Physiol. Plantarum">
        <title>Nucleotide sequence of the 5.6 kbp psbB operon of pea chloroplast DNA.</title>
        <authorList>
            <person name="Lehmbeck J."/>
            <person name="Stummann B.M."/>
            <person name="Henningsen K.W."/>
        </authorList>
    </citation>
    <scope>NUCLEOTIDE SEQUENCE [GENOMIC DNA]</scope>
</reference>
<reference key="2">
    <citation type="submission" date="2000-02" db="EMBL/GenBank/DDBJ databases">
        <title>Long branches in the seed plants and the root of the angiosperms.</title>
        <authorList>
            <person name="Graham S.W."/>
            <person name="Reeves P.A."/>
            <person name="Burns A."/>
            <person name="Olmstead R.G."/>
        </authorList>
    </citation>
    <scope>NUCLEOTIDE SEQUENCE [GENOMIC DNA]</scope>
</reference>
<proteinExistence type="inferred from homology"/>
<sequence length="43" mass="4676">METATLIAISISGLIVSFTGYALYTAFGQPSQQLRDPFEEHGD</sequence>
<dbReference type="EMBL" id="AF153442">
    <property type="protein sequence ID" value="AAD41886.1"/>
    <property type="molecule type" value="Genomic_DNA"/>
</dbReference>
<dbReference type="EMBL" id="AY007467">
    <property type="protein sequence ID" value="AAG12381.1"/>
    <property type="molecule type" value="Genomic_DNA"/>
</dbReference>
<dbReference type="RefSeq" id="YP_003587579.1">
    <property type="nucleotide sequence ID" value="NC_014057.1"/>
</dbReference>
<dbReference type="SMR" id="Q9XQR4"/>
<dbReference type="GeneID" id="9073134"/>
<dbReference type="GO" id="GO:0009535">
    <property type="term" value="C:chloroplast thylakoid membrane"/>
    <property type="evidence" value="ECO:0007669"/>
    <property type="project" value="UniProtKB-SubCell"/>
</dbReference>
<dbReference type="GO" id="GO:0015979">
    <property type="term" value="P:photosynthesis"/>
    <property type="evidence" value="ECO:0007669"/>
    <property type="project" value="InterPro"/>
</dbReference>
<dbReference type="HAMAP" id="MF_00293">
    <property type="entry name" value="PSII_PsbN"/>
    <property type="match status" value="1"/>
</dbReference>
<dbReference type="InterPro" id="IPR003398">
    <property type="entry name" value="PSII_PsbN"/>
</dbReference>
<dbReference type="PANTHER" id="PTHR35326">
    <property type="entry name" value="PROTEIN PSBN"/>
    <property type="match status" value="1"/>
</dbReference>
<dbReference type="PANTHER" id="PTHR35326:SF3">
    <property type="entry name" value="PROTEIN PSBN"/>
    <property type="match status" value="1"/>
</dbReference>
<dbReference type="Pfam" id="PF02468">
    <property type="entry name" value="PsbN"/>
    <property type="match status" value="1"/>
</dbReference>
<gene>
    <name evidence="1" type="primary">psbN</name>
</gene>
<geneLocation type="chloroplast"/>
<keyword id="KW-0150">Chloroplast</keyword>
<keyword id="KW-0472">Membrane</keyword>
<keyword id="KW-0934">Plastid</keyword>
<keyword id="KW-0793">Thylakoid</keyword>
<keyword id="KW-0812">Transmembrane</keyword>
<keyword id="KW-1133">Transmembrane helix</keyword>
<name>PSBN_PEA</name>
<evidence type="ECO:0000255" key="1">
    <source>
        <dbReference type="HAMAP-Rule" id="MF_00293"/>
    </source>
</evidence>
<evidence type="ECO:0000305" key="2"/>
<feature type="chain" id="PRO_0000207937" description="Protein PsbN">
    <location>
        <begin position="1"/>
        <end position="43"/>
    </location>
</feature>
<feature type="transmembrane region" description="Helical" evidence="1">
    <location>
        <begin position="5"/>
        <end position="27"/>
    </location>
</feature>
<feature type="sequence conflict" description="In Ref. 1; AAD41886." evidence="2" ref="1">
    <original>F</original>
    <variation>L</variation>
    <location>
        <position position="38"/>
    </location>
</feature>